<proteinExistence type="inferred from homology"/>
<comment type="function">
    <text evidence="1">Involved in the gluconeogenesis. Catalyzes stereospecifically the conversion of dihydroxyacetone phosphate (DHAP) to D-glyceraldehyde-3-phosphate (G3P).</text>
</comment>
<comment type="catalytic activity">
    <reaction evidence="1">
        <text>D-glyceraldehyde 3-phosphate = dihydroxyacetone phosphate</text>
        <dbReference type="Rhea" id="RHEA:18585"/>
        <dbReference type="ChEBI" id="CHEBI:57642"/>
        <dbReference type="ChEBI" id="CHEBI:59776"/>
        <dbReference type="EC" id="5.3.1.1"/>
    </reaction>
</comment>
<comment type="pathway">
    <text evidence="1">Carbohydrate biosynthesis; gluconeogenesis.</text>
</comment>
<comment type="pathway">
    <text evidence="1">Carbohydrate degradation; glycolysis; D-glyceraldehyde 3-phosphate from glycerone phosphate: step 1/1.</text>
</comment>
<comment type="subunit">
    <text evidence="1">Homodimer.</text>
</comment>
<comment type="subcellular location">
    <subcellularLocation>
        <location evidence="1">Cytoplasm</location>
    </subcellularLocation>
</comment>
<comment type="similarity">
    <text evidence="1">Belongs to the triosephosphate isomerase family.</text>
</comment>
<reference key="1">
    <citation type="journal article" date="2009" name="BMC Genomics">
        <title>Metabolic analysis of the soil microbe Dechloromonas aromatica str. RCB: indications of a surprisingly complex life-style and cryptic anaerobic pathways for aromatic degradation.</title>
        <authorList>
            <person name="Salinero K.K."/>
            <person name="Keller K."/>
            <person name="Feil W.S."/>
            <person name="Feil H."/>
            <person name="Trong S."/>
            <person name="Di Bartolo G."/>
            <person name="Lapidus A."/>
        </authorList>
    </citation>
    <scope>NUCLEOTIDE SEQUENCE [LARGE SCALE GENOMIC DNA]</scope>
    <source>
        <strain>RCB</strain>
    </source>
</reference>
<feature type="chain" id="PRO_0000307456" description="Triosephosphate isomerase">
    <location>
        <begin position="1"/>
        <end position="249"/>
    </location>
</feature>
<feature type="active site" description="Electrophile" evidence="1">
    <location>
        <position position="94"/>
    </location>
</feature>
<feature type="active site" description="Proton acceptor" evidence="1">
    <location>
        <position position="166"/>
    </location>
</feature>
<feature type="binding site" evidence="1">
    <location>
        <begin position="9"/>
        <end position="11"/>
    </location>
    <ligand>
        <name>substrate</name>
    </ligand>
</feature>
<feature type="binding site" evidence="1">
    <location>
        <position position="172"/>
    </location>
    <ligand>
        <name>substrate</name>
    </ligand>
</feature>
<feature type="binding site" evidence="1">
    <location>
        <position position="211"/>
    </location>
    <ligand>
        <name>substrate</name>
    </ligand>
</feature>
<feature type="binding site" evidence="1">
    <location>
        <begin position="232"/>
        <end position="233"/>
    </location>
    <ligand>
        <name>substrate</name>
    </ligand>
</feature>
<dbReference type="EC" id="5.3.1.1" evidence="1"/>
<dbReference type="EMBL" id="CP000089">
    <property type="protein sequence ID" value="AAZ45703.1"/>
    <property type="molecule type" value="Genomic_DNA"/>
</dbReference>
<dbReference type="SMR" id="Q47HH8"/>
<dbReference type="STRING" id="159087.Daro_0947"/>
<dbReference type="KEGG" id="dar:Daro_0947"/>
<dbReference type="eggNOG" id="COG0149">
    <property type="taxonomic scope" value="Bacteria"/>
</dbReference>
<dbReference type="HOGENOM" id="CLU_024251_2_3_4"/>
<dbReference type="OrthoDB" id="9809429at2"/>
<dbReference type="UniPathway" id="UPA00109">
    <property type="reaction ID" value="UER00189"/>
</dbReference>
<dbReference type="UniPathway" id="UPA00138"/>
<dbReference type="GO" id="GO:0005829">
    <property type="term" value="C:cytosol"/>
    <property type="evidence" value="ECO:0007669"/>
    <property type="project" value="TreeGrafter"/>
</dbReference>
<dbReference type="GO" id="GO:0004807">
    <property type="term" value="F:triose-phosphate isomerase activity"/>
    <property type="evidence" value="ECO:0007669"/>
    <property type="project" value="UniProtKB-UniRule"/>
</dbReference>
<dbReference type="GO" id="GO:0006094">
    <property type="term" value="P:gluconeogenesis"/>
    <property type="evidence" value="ECO:0007669"/>
    <property type="project" value="UniProtKB-UniRule"/>
</dbReference>
<dbReference type="GO" id="GO:0046166">
    <property type="term" value="P:glyceraldehyde-3-phosphate biosynthetic process"/>
    <property type="evidence" value="ECO:0007669"/>
    <property type="project" value="TreeGrafter"/>
</dbReference>
<dbReference type="GO" id="GO:0019563">
    <property type="term" value="P:glycerol catabolic process"/>
    <property type="evidence" value="ECO:0007669"/>
    <property type="project" value="TreeGrafter"/>
</dbReference>
<dbReference type="GO" id="GO:0006096">
    <property type="term" value="P:glycolytic process"/>
    <property type="evidence" value="ECO:0007669"/>
    <property type="project" value="UniProtKB-UniRule"/>
</dbReference>
<dbReference type="CDD" id="cd00311">
    <property type="entry name" value="TIM"/>
    <property type="match status" value="1"/>
</dbReference>
<dbReference type="FunFam" id="3.20.20.70:FF:000016">
    <property type="entry name" value="Triosephosphate isomerase"/>
    <property type="match status" value="1"/>
</dbReference>
<dbReference type="Gene3D" id="3.20.20.70">
    <property type="entry name" value="Aldolase class I"/>
    <property type="match status" value="1"/>
</dbReference>
<dbReference type="HAMAP" id="MF_00147_B">
    <property type="entry name" value="TIM_B"/>
    <property type="match status" value="1"/>
</dbReference>
<dbReference type="InterPro" id="IPR013785">
    <property type="entry name" value="Aldolase_TIM"/>
</dbReference>
<dbReference type="InterPro" id="IPR035990">
    <property type="entry name" value="TIM_sf"/>
</dbReference>
<dbReference type="InterPro" id="IPR022896">
    <property type="entry name" value="TrioseP_Isoase_bac/euk"/>
</dbReference>
<dbReference type="InterPro" id="IPR000652">
    <property type="entry name" value="Triosephosphate_isomerase"/>
</dbReference>
<dbReference type="InterPro" id="IPR020861">
    <property type="entry name" value="Triosephosphate_isomerase_AS"/>
</dbReference>
<dbReference type="NCBIfam" id="TIGR00419">
    <property type="entry name" value="tim"/>
    <property type="match status" value="1"/>
</dbReference>
<dbReference type="PANTHER" id="PTHR21139">
    <property type="entry name" value="TRIOSEPHOSPHATE ISOMERASE"/>
    <property type="match status" value="1"/>
</dbReference>
<dbReference type="PANTHER" id="PTHR21139:SF42">
    <property type="entry name" value="TRIOSEPHOSPHATE ISOMERASE"/>
    <property type="match status" value="1"/>
</dbReference>
<dbReference type="Pfam" id="PF00121">
    <property type="entry name" value="TIM"/>
    <property type="match status" value="1"/>
</dbReference>
<dbReference type="SUPFAM" id="SSF51351">
    <property type="entry name" value="Triosephosphate isomerase (TIM)"/>
    <property type="match status" value="1"/>
</dbReference>
<dbReference type="PROSITE" id="PS00171">
    <property type="entry name" value="TIM_1"/>
    <property type="match status" value="1"/>
</dbReference>
<dbReference type="PROSITE" id="PS51440">
    <property type="entry name" value="TIM_2"/>
    <property type="match status" value="1"/>
</dbReference>
<protein>
    <recommendedName>
        <fullName evidence="1">Triosephosphate isomerase</fullName>
        <shortName evidence="1">TIM</shortName>
        <shortName evidence="1">TPI</shortName>
        <ecNumber evidence="1">5.3.1.1</ecNumber>
    </recommendedName>
    <alternativeName>
        <fullName evidence="1">Triose-phosphate isomerase</fullName>
    </alternativeName>
</protein>
<sequence>MRKKLVAGNWKMHGSLQQNAALLELIKAGVSSLPCEVAVCPPYPYLGQVQSILSGSALAWGAQSVSEHQSGAFTGEVAASMLLEFGCRYVLVGHSERRALYGETDTVVSAKFEAVQRAGLVPVLCVGETLAERESGMTSVVVARQLSAVLGRVGVAAMASAVVAYEPVWAIGTGVTASPAQAQEVHAAIRAKVAELDLGVANGLRILYGGSVKPQNAMELFGQDDIDGGLIGGAALVADDFLAICRAAN</sequence>
<evidence type="ECO:0000255" key="1">
    <source>
        <dbReference type="HAMAP-Rule" id="MF_00147"/>
    </source>
</evidence>
<name>TPIS_DECAR</name>
<accession>Q47HH8</accession>
<organism>
    <name type="scientific">Dechloromonas aromatica (strain RCB)</name>
    <dbReference type="NCBI Taxonomy" id="159087"/>
    <lineage>
        <taxon>Bacteria</taxon>
        <taxon>Pseudomonadati</taxon>
        <taxon>Pseudomonadota</taxon>
        <taxon>Betaproteobacteria</taxon>
        <taxon>Rhodocyclales</taxon>
        <taxon>Azonexaceae</taxon>
        <taxon>Dechloromonas</taxon>
    </lineage>
</organism>
<gene>
    <name evidence="1" type="primary">tpiA</name>
    <name type="ordered locus">Daro_0947</name>
</gene>
<keyword id="KW-0963">Cytoplasm</keyword>
<keyword id="KW-0312">Gluconeogenesis</keyword>
<keyword id="KW-0324">Glycolysis</keyword>
<keyword id="KW-0413">Isomerase</keyword>